<evidence type="ECO:0000255" key="1">
    <source>
        <dbReference type="HAMAP-Rule" id="MF_00851"/>
    </source>
</evidence>
<evidence type="ECO:0000269" key="2">
    <source>
    </source>
</evidence>
<evidence type="ECO:0000303" key="3">
    <source>
    </source>
</evidence>
<evidence type="ECO:0000305" key="4"/>
<evidence type="ECO:0000305" key="5">
    <source>
    </source>
</evidence>
<evidence type="ECO:0000312" key="6">
    <source>
        <dbReference type="EMBL" id="QNV50557.1"/>
    </source>
</evidence>
<evidence type="ECO:0007744" key="7">
    <source>
        <dbReference type="PDB" id="6TC3"/>
    </source>
</evidence>
<evidence type="ECO:0007744" key="8">
    <source>
        <dbReference type="PDB" id="6TVB"/>
    </source>
</evidence>
<protein>
    <recommendedName>
        <fullName evidence="1 3">Leader peptide SpeFL</fullName>
    </recommendedName>
    <alternativeName>
        <fullName evidence="1 3">Arrest peptide SpeFL</fullName>
    </alternativeName>
</protein>
<reference key="1">
    <citation type="journal article" date="1997" name="Science">
        <title>The complete genome sequence of Escherichia coli K-12.</title>
        <authorList>
            <person name="Blattner F.R."/>
            <person name="Plunkett G. III"/>
            <person name="Bloch C.A."/>
            <person name="Perna N.T."/>
            <person name="Burland V."/>
            <person name="Riley M."/>
            <person name="Collado-Vides J."/>
            <person name="Glasner J.D."/>
            <person name="Rode C.K."/>
            <person name="Mayhew G.F."/>
            <person name="Gregor J."/>
            <person name="Davis N.W."/>
            <person name="Kirkpatrick H.A."/>
            <person name="Goeden M.A."/>
            <person name="Rose D.J."/>
            <person name="Mau B."/>
            <person name="Shao Y."/>
        </authorList>
    </citation>
    <scope>NUCLEOTIDE SEQUENCE [LARGE SCALE GENOMIC DNA]</scope>
    <source>
        <strain>K12 / MG1655 / ATCC 47076</strain>
    </source>
</reference>
<reference key="2">
    <citation type="journal article" date="2020" name="Nat. Microbiol.">
        <title>Ornithine capture by a translating ribosome controls bacterial polyamine synthesis.</title>
        <authorList>
            <person name="Herrero Del Valle A."/>
            <person name="Seip B."/>
            <person name="Cervera-Marzal I."/>
            <person name="Sacheau G."/>
            <person name="Seefeldt A.C."/>
            <person name="Innis C.A."/>
        </authorList>
    </citation>
    <scope>STRUCTURE BY ELECTRON MICROSCOPY (2.7 ANGSTROMS) IN COMPLEX WITH STALLED 70S RIBOSOMES AND ORNITHINE</scope>
    <scope>FUNCTION</scope>
    <scope>SUBUNIT</scope>
    <scope>DOMAIN</scope>
    <scope>INDUCTION</scope>
    <scope>MUTAGENESIS OF 1-MET--THR-7; 2-GLU--ARG-34; HIS-10; ILE-11; 12-ARG-ARG-13; HIS-16; PHE-26; PHE-28; PHE-30 AND PHE-31</scope>
    <source>
        <strain>K12 / MG1655 / ATCC 47076</strain>
    </source>
</reference>
<dbReference type="EMBL" id="U00096">
    <property type="protein sequence ID" value="QNV50557.1"/>
    <property type="molecule type" value="Genomic_DNA"/>
</dbReference>
<dbReference type="PDB" id="6TBV">
    <property type="method" value="EM"/>
    <property type="resolution" value="2.70 A"/>
    <property type="chains" value="SPE1=1-34"/>
</dbReference>
<dbReference type="PDB" id="6TC3">
    <property type="method" value="EM"/>
    <property type="resolution" value="2.70 A"/>
    <property type="chains" value="SPE1=1-34"/>
</dbReference>
<dbReference type="PDB" id="6TVB">
    <property type="method" value="EM"/>
    <property type="resolution" value="2.70 A"/>
    <property type="chains" value="SPE1=1-34"/>
</dbReference>
<dbReference type="PDBsum" id="6TBV"/>
<dbReference type="PDBsum" id="6TC3"/>
<dbReference type="PDBsum" id="6TVB"/>
<dbReference type="SMR" id="P0DTV7"/>
<dbReference type="FunCoup" id="P0DTV7">
    <property type="interactions" value="1"/>
</dbReference>
<dbReference type="InParanoid" id="P0DTV7"/>
<dbReference type="BioCyc" id="EcoCyc:MONOMER0-4532"/>
<dbReference type="Proteomes" id="UP000000625">
    <property type="component" value="Chromosome"/>
</dbReference>
<dbReference type="GO" id="GO:0019843">
    <property type="term" value="F:rRNA binding"/>
    <property type="evidence" value="ECO:0007669"/>
    <property type="project" value="UniProtKB-KW"/>
</dbReference>
<dbReference type="GO" id="GO:0006448">
    <property type="term" value="P:regulation of translational elongation"/>
    <property type="evidence" value="ECO:0000315"/>
    <property type="project" value="EcoCyc"/>
</dbReference>
<dbReference type="GO" id="GO:0031556">
    <property type="term" value="P:transcriptional attenuation by ribosome"/>
    <property type="evidence" value="ECO:0000315"/>
    <property type="project" value="EcoCyc"/>
</dbReference>
<dbReference type="HAMAP" id="MF_00851">
    <property type="entry name" value="Leader_SpeFL"/>
    <property type="match status" value="1"/>
</dbReference>
<dbReference type="InterPro" id="IPR021237">
    <property type="entry name" value="SpeFL"/>
</dbReference>
<sequence>MENNSRTMPHIRRTTHIMKFAHRNSFDFHFFNAR</sequence>
<proteinExistence type="evidence at protein level"/>
<accession>P0DTV7</accession>
<accession>A0A7H2C7B0</accession>
<gene>
    <name evidence="1 3" type="primary">speFL</name>
    <name evidence="6" type="ordered locus">b4803</name>
</gene>
<comment type="function">
    <text evidence="1 2 5">A small protein (arrest peptide) encoded upstream of inducible ornithine carboxylase gene (speF) that controls expression of downstream genes (speF and patE) by nascent chain-translational arrest and transcriptional attenuation. In the presence of ornithine a toeprint due to ribosomal arrest can be seen on the speFL transcript. Only L-ornithine (not other tested amino acids) has this effect (PubMed:32094585). It is thought that in the presence of ornithine, ribosomal stalling on speFL prevents binding of Rho transcription termination factor to a downstream rut site allowing transcription of the operon. In the absence of ornithine, ribosomes terminate translation and are recycled, exposing the rut site allowing Rho to bind and prematurely terminate transcription. The presence of a pair of rare Arg codons could slow down translation to prevent polysome accumulation and to expose the rut site to Rho (Probable).</text>
</comment>
<comment type="subunit">
    <text evidence="1 2">Binds ornithine in stalled 70S ribosomes, blocking the upper two-thirds of the exit tunnel. Contacts 23S rRNA and ribosomal proteins L4 and L22.</text>
</comment>
<comment type="induction">
    <text evidence="1 2">Induced by ornithine; putrescine does not trigger ribosome stalling and so appears to repress expression. Part of the speFL-speF-potE operon.</text>
</comment>
<comment type="domain">
    <text evidence="5">An N-terminal sensor domain binds ornithine already present in the ribosomal exit tunnel; upon ornithine binding the downstream effector domain compacts in the exit tunnel, causing a shift of 23S rRNA U2585 which blocks the action of peptide chain release factor 1 (prfA), causing ribosome stalling.</text>
</comment>
<comment type="miscellaneous">
    <text evidence="2">Changing the amino acid sequence by 2 frameshifts with minimal nucleotide changes indicates the peptide sequence, but not mRNA structure is important.</text>
</comment>
<comment type="similarity">
    <text evidence="1 4">Belongs to the speF operon leader peptide family.</text>
</comment>
<organism>
    <name type="scientific">Escherichia coli (strain K12)</name>
    <dbReference type="NCBI Taxonomy" id="83333"/>
    <lineage>
        <taxon>Bacteria</taxon>
        <taxon>Pseudomonadati</taxon>
        <taxon>Pseudomonadota</taxon>
        <taxon>Gammaproteobacteria</taxon>
        <taxon>Enterobacterales</taxon>
        <taxon>Enterobacteriaceae</taxon>
        <taxon>Escherichia</taxon>
    </lineage>
</organism>
<feature type="chain" id="PRO_0000450346" description="Leader peptide SpeFL">
    <location>
        <begin position="1"/>
        <end position="34"/>
    </location>
</feature>
<feature type="region of interest" description="Sensor domain" evidence="5">
    <location>
        <begin position="1"/>
        <end position="13"/>
    </location>
</feature>
<feature type="region of interest" description="Effector domain" evidence="5">
    <location>
        <begin position="14"/>
        <end position="34"/>
    </location>
</feature>
<feature type="short sequence motif" description="Ornithine recognition loop" evidence="1 2">
    <location>
        <begin position="10"/>
        <end position="16"/>
    </location>
</feature>
<feature type="binding site" evidence="1 2 7 8">
    <location>
        <position position="13"/>
    </location>
    <ligand>
        <name>L-ornithine</name>
        <dbReference type="ChEBI" id="CHEBI:46911"/>
    </ligand>
</feature>
<feature type="mutagenesis site" description="Loss of ornithine-dependent translation arrest in vitro." evidence="2">
    <location>
        <begin position="1"/>
        <end position="7"/>
    </location>
</feature>
<feature type="mutagenesis site" description="Loss of ribosome stalling, nucleotide sequence is almost identical." evidence="2">
    <original>ENNSRTMPHIRRTTHIMKFAHRNSFDFHFFNAR</original>
    <variation>KITAALCPISGGQLILSSLLIAIASTFTSSMPV</variation>
    <location>
        <begin position="2"/>
        <end position="34"/>
    </location>
</feature>
<feature type="mutagenesis site" description="Loss of ornithine-dependent translation arrest in vitro." evidence="2">
    <original>H</original>
    <variation>A</variation>
    <location>
        <position position="10"/>
    </location>
</feature>
<feature type="mutagenesis site" description="Loss of ornithine-dependent translation arrest in vitro." evidence="2">
    <original>I</original>
    <variation>A</variation>
    <location>
        <position position="11"/>
    </location>
</feature>
<feature type="mutagenesis site" description="Loss of ornithine-dependent translation arrest in vitro." evidence="2">
    <original>RR</original>
    <variation>AA</variation>
    <variation>KK</variation>
    <location>
        <begin position="12"/>
        <end position="13"/>
    </location>
</feature>
<feature type="mutagenesis site" description="Loss of ornithine-dependent translation arrest in vitro." evidence="2">
    <original>H</original>
    <variation>A</variation>
    <location>
        <position position="16"/>
    </location>
</feature>
<feature type="mutagenesis site" description="Loss of ornithine-dependent translation arrest in vitro." evidence="2">
    <original>F</original>
    <variation>A</variation>
    <location>
        <position position="26"/>
    </location>
</feature>
<feature type="mutagenesis site" description="Loss of ornithine-dependent translation arrest in vitro." evidence="2">
    <original>F</original>
    <variation>A</variation>
    <location>
        <position position="28"/>
    </location>
</feature>
<feature type="mutagenesis site" description="Loss of ornithine-dependent translation arrest in vitro." evidence="2">
    <original>F</original>
    <variation>A</variation>
    <location>
        <position position="30"/>
    </location>
</feature>
<feature type="mutagenesis site" description="Loss of ornithine-dependent translation arrest in vitro." evidence="2">
    <original>F</original>
    <variation>A</variation>
    <location>
        <position position="31"/>
    </location>
</feature>
<name>SPEFL_ECOLI</name>
<keyword id="KW-0002">3D-structure</keyword>
<keyword id="KW-0428">Leader peptide</keyword>
<keyword id="KW-1185">Reference proteome</keyword>
<keyword id="KW-0694">RNA-binding</keyword>
<keyword id="KW-0699">rRNA-binding</keyword>
<keyword id="KW-0804">Transcription</keyword>
<keyword id="KW-0805">Transcription regulation</keyword>
<keyword id="KW-0810">Translation regulation</keyword>